<gene>
    <name evidence="1" type="primary">aroB</name>
    <name type="ordered locus">azo3644</name>
</gene>
<evidence type="ECO:0000255" key="1">
    <source>
        <dbReference type="HAMAP-Rule" id="MF_00110"/>
    </source>
</evidence>
<dbReference type="EC" id="4.2.3.4" evidence="1"/>
<dbReference type="EMBL" id="AM406670">
    <property type="protein sequence ID" value="CAL96260.1"/>
    <property type="molecule type" value="Genomic_DNA"/>
</dbReference>
<dbReference type="RefSeq" id="WP_011767366.1">
    <property type="nucleotide sequence ID" value="NC_008702.1"/>
</dbReference>
<dbReference type="SMR" id="A1KBQ4"/>
<dbReference type="STRING" id="62928.azo3644"/>
<dbReference type="KEGG" id="azo:azo3644"/>
<dbReference type="eggNOG" id="COG0337">
    <property type="taxonomic scope" value="Bacteria"/>
</dbReference>
<dbReference type="HOGENOM" id="CLU_001201_0_2_4"/>
<dbReference type="UniPathway" id="UPA00053">
    <property type="reaction ID" value="UER00085"/>
</dbReference>
<dbReference type="Proteomes" id="UP000002588">
    <property type="component" value="Chromosome"/>
</dbReference>
<dbReference type="GO" id="GO:0005737">
    <property type="term" value="C:cytoplasm"/>
    <property type="evidence" value="ECO:0007669"/>
    <property type="project" value="UniProtKB-SubCell"/>
</dbReference>
<dbReference type="GO" id="GO:0003856">
    <property type="term" value="F:3-dehydroquinate synthase activity"/>
    <property type="evidence" value="ECO:0007669"/>
    <property type="project" value="UniProtKB-UniRule"/>
</dbReference>
<dbReference type="GO" id="GO:0046872">
    <property type="term" value="F:metal ion binding"/>
    <property type="evidence" value="ECO:0007669"/>
    <property type="project" value="UniProtKB-KW"/>
</dbReference>
<dbReference type="GO" id="GO:0000166">
    <property type="term" value="F:nucleotide binding"/>
    <property type="evidence" value="ECO:0007669"/>
    <property type="project" value="UniProtKB-KW"/>
</dbReference>
<dbReference type="GO" id="GO:0008652">
    <property type="term" value="P:amino acid biosynthetic process"/>
    <property type="evidence" value="ECO:0007669"/>
    <property type="project" value="UniProtKB-KW"/>
</dbReference>
<dbReference type="GO" id="GO:0009073">
    <property type="term" value="P:aromatic amino acid family biosynthetic process"/>
    <property type="evidence" value="ECO:0007669"/>
    <property type="project" value="UniProtKB-KW"/>
</dbReference>
<dbReference type="GO" id="GO:0009423">
    <property type="term" value="P:chorismate biosynthetic process"/>
    <property type="evidence" value="ECO:0007669"/>
    <property type="project" value="UniProtKB-UniRule"/>
</dbReference>
<dbReference type="CDD" id="cd08195">
    <property type="entry name" value="DHQS"/>
    <property type="match status" value="1"/>
</dbReference>
<dbReference type="FunFam" id="1.20.1090.10:FF:000002">
    <property type="entry name" value="3-dehydroquinate synthase"/>
    <property type="match status" value="1"/>
</dbReference>
<dbReference type="FunFam" id="3.40.50.1970:FF:000001">
    <property type="entry name" value="3-dehydroquinate synthase"/>
    <property type="match status" value="1"/>
</dbReference>
<dbReference type="Gene3D" id="3.40.50.1970">
    <property type="match status" value="1"/>
</dbReference>
<dbReference type="Gene3D" id="1.20.1090.10">
    <property type="entry name" value="Dehydroquinate synthase-like - alpha domain"/>
    <property type="match status" value="1"/>
</dbReference>
<dbReference type="HAMAP" id="MF_00110">
    <property type="entry name" value="DHQ_synthase"/>
    <property type="match status" value="1"/>
</dbReference>
<dbReference type="InterPro" id="IPR050071">
    <property type="entry name" value="Dehydroquinate_synthase"/>
</dbReference>
<dbReference type="InterPro" id="IPR016037">
    <property type="entry name" value="DHQ_synth_AroB"/>
</dbReference>
<dbReference type="InterPro" id="IPR030963">
    <property type="entry name" value="DHQ_synth_fam"/>
</dbReference>
<dbReference type="InterPro" id="IPR030960">
    <property type="entry name" value="DHQS/DOIS_N"/>
</dbReference>
<dbReference type="InterPro" id="IPR056179">
    <property type="entry name" value="DHQS_C"/>
</dbReference>
<dbReference type="NCBIfam" id="TIGR01357">
    <property type="entry name" value="aroB"/>
    <property type="match status" value="1"/>
</dbReference>
<dbReference type="PANTHER" id="PTHR43622">
    <property type="entry name" value="3-DEHYDROQUINATE SYNTHASE"/>
    <property type="match status" value="1"/>
</dbReference>
<dbReference type="PANTHER" id="PTHR43622:SF7">
    <property type="entry name" value="3-DEHYDROQUINATE SYNTHASE, CHLOROPLASTIC"/>
    <property type="match status" value="1"/>
</dbReference>
<dbReference type="Pfam" id="PF01761">
    <property type="entry name" value="DHQ_synthase"/>
    <property type="match status" value="1"/>
</dbReference>
<dbReference type="Pfam" id="PF24621">
    <property type="entry name" value="DHQS_C"/>
    <property type="match status" value="1"/>
</dbReference>
<dbReference type="PIRSF" id="PIRSF001455">
    <property type="entry name" value="DHQ_synth"/>
    <property type="match status" value="1"/>
</dbReference>
<dbReference type="SUPFAM" id="SSF56796">
    <property type="entry name" value="Dehydroquinate synthase-like"/>
    <property type="match status" value="1"/>
</dbReference>
<name>AROB_AZOSB</name>
<comment type="function">
    <text evidence="1">Catalyzes the conversion of 3-deoxy-D-arabino-heptulosonate 7-phosphate (DAHP) to dehydroquinate (DHQ).</text>
</comment>
<comment type="catalytic activity">
    <reaction evidence="1">
        <text>7-phospho-2-dehydro-3-deoxy-D-arabino-heptonate = 3-dehydroquinate + phosphate</text>
        <dbReference type="Rhea" id="RHEA:21968"/>
        <dbReference type="ChEBI" id="CHEBI:32364"/>
        <dbReference type="ChEBI" id="CHEBI:43474"/>
        <dbReference type="ChEBI" id="CHEBI:58394"/>
        <dbReference type="EC" id="4.2.3.4"/>
    </reaction>
</comment>
<comment type="cofactor">
    <cofactor evidence="1">
        <name>Co(2+)</name>
        <dbReference type="ChEBI" id="CHEBI:48828"/>
    </cofactor>
    <cofactor evidence="1">
        <name>Zn(2+)</name>
        <dbReference type="ChEBI" id="CHEBI:29105"/>
    </cofactor>
    <text evidence="1">Binds 1 divalent metal cation per subunit. Can use either Co(2+) or Zn(2+).</text>
</comment>
<comment type="cofactor">
    <cofactor evidence="1">
        <name>NAD(+)</name>
        <dbReference type="ChEBI" id="CHEBI:57540"/>
    </cofactor>
</comment>
<comment type="pathway">
    <text evidence="1">Metabolic intermediate biosynthesis; chorismate biosynthesis; chorismate from D-erythrose 4-phosphate and phosphoenolpyruvate: step 2/7.</text>
</comment>
<comment type="subcellular location">
    <subcellularLocation>
        <location evidence="1">Cytoplasm</location>
    </subcellularLocation>
</comment>
<comment type="similarity">
    <text evidence="1">Belongs to the sugar phosphate cyclases superfamily. Dehydroquinate synthase family.</text>
</comment>
<keyword id="KW-0028">Amino-acid biosynthesis</keyword>
<keyword id="KW-0057">Aromatic amino acid biosynthesis</keyword>
<keyword id="KW-0170">Cobalt</keyword>
<keyword id="KW-0963">Cytoplasm</keyword>
<keyword id="KW-0456">Lyase</keyword>
<keyword id="KW-0479">Metal-binding</keyword>
<keyword id="KW-0520">NAD</keyword>
<keyword id="KW-0547">Nucleotide-binding</keyword>
<keyword id="KW-1185">Reference proteome</keyword>
<keyword id="KW-0862">Zinc</keyword>
<feature type="chain" id="PRO_1000094454" description="3-dehydroquinate synthase">
    <location>
        <begin position="1"/>
        <end position="360"/>
    </location>
</feature>
<feature type="binding site" evidence="1">
    <location>
        <begin position="71"/>
        <end position="76"/>
    </location>
    <ligand>
        <name>NAD(+)</name>
        <dbReference type="ChEBI" id="CHEBI:57540"/>
    </ligand>
</feature>
<feature type="binding site" evidence="1">
    <location>
        <begin position="105"/>
        <end position="109"/>
    </location>
    <ligand>
        <name>NAD(+)</name>
        <dbReference type="ChEBI" id="CHEBI:57540"/>
    </ligand>
</feature>
<feature type="binding site" evidence="1">
    <location>
        <begin position="129"/>
        <end position="130"/>
    </location>
    <ligand>
        <name>NAD(+)</name>
        <dbReference type="ChEBI" id="CHEBI:57540"/>
    </ligand>
</feature>
<feature type="binding site" evidence="1">
    <location>
        <position position="142"/>
    </location>
    <ligand>
        <name>NAD(+)</name>
        <dbReference type="ChEBI" id="CHEBI:57540"/>
    </ligand>
</feature>
<feature type="binding site" evidence="1">
    <location>
        <position position="151"/>
    </location>
    <ligand>
        <name>NAD(+)</name>
        <dbReference type="ChEBI" id="CHEBI:57540"/>
    </ligand>
</feature>
<feature type="binding site" evidence="1">
    <location>
        <position position="184"/>
    </location>
    <ligand>
        <name>Zn(2+)</name>
        <dbReference type="ChEBI" id="CHEBI:29105"/>
    </ligand>
</feature>
<feature type="binding site" evidence="1">
    <location>
        <position position="247"/>
    </location>
    <ligand>
        <name>Zn(2+)</name>
        <dbReference type="ChEBI" id="CHEBI:29105"/>
    </ligand>
</feature>
<feature type="binding site" evidence="1">
    <location>
        <position position="264"/>
    </location>
    <ligand>
        <name>Zn(2+)</name>
        <dbReference type="ChEBI" id="CHEBI:29105"/>
    </ligand>
</feature>
<sequence>MRTLNVALGDRSYPIHIGAGLLARPELIVPLLRTPRVAIVTNTVVGPLYLERLTAGLESHGIAVSTVVLPDGEAHKDWTTLNRIFDMLLESRCERSTTLLALGGGVVGDMGGFAAATYQRGMPFMQIPTTLLSQVDSSVGGKTAINHPLGKNMIGAFYQPRLVLADIEVLNTLPDRELSAGLAEVIKYGLIRDPAFYAWLEENIERLRARDPEALAYAIERSCRNKAEVVAADETEQGERALLNLGHTFGHAIETGMGYGEWLHGEAVAAGTMMAAELSRALGWLTDDDVNRIEALFVRAGLPVRAPALGIERYLELMAHDKKVESGRLRLVLLASIGKALMFGDATAGEIGAAISRRCG</sequence>
<organism>
    <name type="scientific">Azoarcus sp. (strain BH72)</name>
    <dbReference type="NCBI Taxonomy" id="418699"/>
    <lineage>
        <taxon>Bacteria</taxon>
        <taxon>Pseudomonadati</taxon>
        <taxon>Pseudomonadota</taxon>
        <taxon>Betaproteobacteria</taxon>
        <taxon>Rhodocyclales</taxon>
        <taxon>Zoogloeaceae</taxon>
        <taxon>Azoarcus</taxon>
    </lineage>
</organism>
<proteinExistence type="inferred from homology"/>
<protein>
    <recommendedName>
        <fullName evidence="1">3-dehydroquinate synthase</fullName>
        <shortName evidence="1">DHQS</shortName>
        <ecNumber evidence="1">4.2.3.4</ecNumber>
    </recommendedName>
</protein>
<accession>A1KBQ4</accession>
<reference key="1">
    <citation type="journal article" date="2006" name="Nat. Biotechnol.">
        <title>Complete genome of the mutualistic, N2-fixing grass endophyte Azoarcus sp. strain BH72.</title>
        <authorList>
            <person name="Krause A."/>
            <person name="Ramakumar A."/>
            <person name="Bartels D."/>
            <person name="Battistoni F."/>
            <person name="Bekel T."/>
            <person name="Boch J."/>
            <person name="Boehm M."/>
            <person name="Friedrich F."/>
            <person name="Hurek T."/>
            <person name="Krause L."/>
            <person name="Linke B."/>
            <person name="McHardy A.C."/>
            <person name="Sarkar A."/>
            <person name="Schneiker S."/>
            <person name="Syed A.A."/>
            <person name="Thauer R."/>
            <person name="Vorhoelter F.-J."/>
            <person name="Weidner S."/>
            <person name="Puehler A."/>
            <person name="Reinhold-Hurek B."/>
            <person name="Kaiser O."/>
            <person name="Goesmann A."/>
        </authorList>
    </citation>
    <scope>NUCLEOTIDE SEQUENCE [LARGE SCALE GENOMIC DNA]</scope>
    <source>
        <strain>BH72</strain>
    </source>
</reference>